<keyword id="KW-0004">4Fe-4S</keyword>
<keyword id="KW-0067">ATP-binding</keyword>
<keyword id="KW-0963">Cytoplasm</keyword>
<keyword id="KW-0408">Iron</keyword>
<keyword id="KW-0411">Iron-sulfur</keyword>
<keyword id="KW-0479">Metal-binding</keyword>
<keyword id="KW-0547">Nucleotide-binding</keyword>
<keyword id="KW-0539">Nucleus</keyword>
<keyword id="KW-1185">Reference proteome</keyword>
<reference key="1">
    <citation type="journal article" date="1996" name="Gene">
        <title>NBP35 encodes an essential and evolutionary conserved protein in Saccharomyces cerevisiae with homology to a superfamily of bacterial ATPases.</title>
        <authorList>
            <person name="Vitale G."/>
            <person name="Fabre E."/>
            <person name="Hurt E.C."/>
        </authorList>
    </citation>
    <scope>NUCLEOTIDE SEQUENCE [GENOMIC DNA]</scope>
    <source>
        <strain>JU4.2XJRZ619B</strain>
    </source>
</reference>
<reference key="2">
    <citation type="journal article" date="1997" name="Yeast">
        <title>Sequence analysis of 203 kilobases from Saccharomyces cerevisiae chromosome VII.</title>
        <authorList>
            <person name="Rieger M."/>
            <person name="Brueckner M."/>
            <person name="Schaefer M."/>
            <person name="Mueller-Auer S."/>
        </authorList>
    </citation>
    <scope>NUCLEOTIDE SEQUENCE [GENOMIC DNA]</scope>
    <scope>SUBCELLULAR LOCATION</scope>
    <scope>MUTAGENESIS OF CYS-44 AND LYS-86</scope>
    <source>
        <strain>ATCC 204508 / S288c</strain>
    </source>
</reference>
<reference key="3">
    <citation type="journal article" date="1997" name="Nature">
        <title>The nucleotide sequence of Saccharomyces cerevisiae chromosome VII.</title>
        <authorList>
            <person name="Tettelin H."/>
            <person name="Agostoni-Carbone M.L."/>
            <person name="Albermann K."/>
            <person name="Albers M."/>
            <person name="Arroyo J."/>
            <person name="Backes U."/>
            <person name="Barreiros T."/>
            <person name="Bertani I."/>
            <person name="Bjourson A.J."/>
            <person name="Brueckner M."/>
            <person name="Bruschi C.V."/>
            <person name="Carignani G."/>
            <person name="Castagnoli L."/>
            <person name="Cerdan E."/>
            <person name="Clemente M.L."/>
            <person name="Coblenz A."/>
            <person name="Coglievina M."/>
            <person name="Coissac E."/>
            <person name="Defoor E."/>
            <person name="Del Bino S."/>
            <person name="Delius H."/>
            <person name="Delneri D."/>
            <person name="de Wergifosse P."/>
            <person name="Dujon B."/>
            <person name="Durand P."/>
            <person name="Entian K.-D."/>
            <person name="Eraso P."/>
            <person name="Escribano V."/>
            <person name="Fabiani L."/>
            <person name="Fartmann B."/>
            <person name="Feroli F."/>
            <person name="Feuermann M."/>
            <person name="Frontali L."/>
            <person name="Garcia-Gonzalez M."/>
            <person name="Garcia-Saez M.I."/>
            <person name="Goffeau A."/>
            <person name="Guerreiro P."/>
            <person name="Hani J."/>
            <person name="Hansen M."/>
            <person name="Hebling U."/>
            <person name="Hernandez K."/>
            <person name="Heumann K."/>
            <person name="Hilger F."/>
            <person name="Hofmann B."/>
            <person name="Indge K.J."/>
            <person name="James C.M."/>
            <person name="Klima R."/>
            <person name="Koetter P."/>
            <person name="Kramer B."/>
            <person name="Kramer W."/>
            <person name="Lauquin G."/>
            <person name="Leuther H."/>
            <person name="Louis E.J."/>
            <person name="Maillier E."/>
            <person name="Marconi A."/>
            <person name="Martegani E."/>
            <person name="Mazon M.J."/>
            <person name="Mazzoni C."/>
            <person name="McReynolds A.D.K."/>
            <person name="Melchioretto P."/>
            <person name="Mewes H.-W."/>
            <person name="Minenkova O."/>
            <person name="Mueller-Auer S."/>
            <person name="Nawrocki A."/>
            <person name="Netter P."/>
            <person name="Neu R."/>
            <person name="Nombela C."/>
            <person name="Oliver S.G."/>
            <person name="Panzeri L."/>
            <person name="Paoluzi S."/>
            <person name="Plevani P."/>
            <person name="Portetelle D."/>
            <person name="Portillo F."/>
            <person name="Potier S."/>
            <person name="Purnelle B."/>
            <person name="Rieger M."/>
            <person name="Riles L."/>
            <person name="Rinaldi T."/>
            <person name="Robben J."/>
            <person name="Rodrigues-Pousada C."/>
            <person name="Rodriguez-Belmonte E."/>
            <person name="Rodriguez-Torres A.M."/>
            <person name="Rose M."/>
            <person name="Ruzzi M."/>
            <person name="Saliola M."/>
            <person name="Sanchez-Perez M."/>
            <person name="Schaefer B."/>
            <person name="Schaefer M."/>
            <person name="Scharfe M."/>
            <person name="Schmidheini T."/>
            <person name="Schreer A."/>
            <person name="Skala J."/>
            <person name="Souciet J.-L."/>
            <person name="Steensma H.Y."/>
            <person name="Talla E."/>
            <person name="Thierry A."/>
            <person name="Vandenbol M."/>
            <person name="van der Aart Q.J.M."/>
            <person name="Van Dyck L."/>
            <person name="Vanoni M."/>
            <person name="Verhasselt P."/>
            <person name="Voet M."/>
            <person name="Volckaert G."/>
            <person name="Wambutt R."/>
            <person name="Watson M.D."/>
            <person name="Weber N."/>
            <person name="Wedler E."/>
            <person name="Wedler H."/>
            <person name="Wipfli P."/>
            <person name="Wolf K."/>
            <person name="Wright L.F."/>
            <person name="Zaccaria P."/>
            <person name="Zimmermann M."/>
            <person name="Zollner A."/>
            <person name="Kleine K."/>
        </authorList>
    </citation>
    <scope>NUCLEOTIDE SEQUENCE [LARGE SCALE GENOMIC DNA]</scope>
    <source>
        <strain>ATCC 204508 / S288c</strain>
    </source>
</reference>
<reference key="4">
    <citation type="journal article" date="2014" name="G3 (Bethesda)">
        <title>The reference genome sequence of Saccharomyces cerevisiae: Then and now.</title>
        <authorList>
            <person name="Engel S.R."/>
            <person name="Dietrich F.S."/>
            <person name="Fisk D.G."/>
            <person name="Binkley G."/>
            <person name="Balakrishnan R."/>
            <person name="Costanzo M.C."/>
            <person name="Dwight S.S."/>
            <person name="Hitz B.C."/>
            <person name="Karra K."/>
            <person name="Nash R.S."/>
            <person name="Weng S."/>
            <person name="Wong E.D."/>
            <person name="Lloyd P."/>
            <person name="Skrzypek M.S."/>
            <person name="Miyasato S.R."/>
            <person name="Simison M."/>
            <person name="Cherry J.M."/>
        </authorList>
    </citation>
    <scope>GENOME REANNOTATION</scope>
    <source>
        <strain>ATCC 204508 / S288c</strain>
    </source>
</reference>
<reference key="5">
    <citation type="journal article" date="2003" name="Nature">
        <title>Global analysis of protein localization in budding yeast.</title>
        <authorList>
            <person name="Huh W.-K."/>
            <person name="Falvo J.V."/>
            <person name="Gerke L.C."/>
            <person name="Carroll A.S."/>
            <person name="Howson R.W."/>
            <person name="Weissman J.S."/>
            <person name="O'Shea E.K."/>
        </authorList>
    </citation>
    <scope>SUBCELLULAR LOCATION [LARGE SCALE ANALYSIS]</scope>
</reference>
<reference key="6">
    <citation type="journal article" date="2005" name="Biochem. Soc. Trans.">
        <title>Nar1p, a conserved eukaryotic protein with similarity to Fe-only hydrogenases, functions in cytosolic iron-sulphur protein biogenesis.</title>
        <authorList>
            <person name="Balk J."/>
            <person name="Pierik A.J."/>
            <person name="Aguilar Netz D.J."/>
            <person name="Muehlenhoff U."/>
            <person name="Lill R."/>
        </authorList>
    </citation>
    <scope>FUNCTION</scope>
</reference>
<reference key="7">
    <citation type="journal article" date="2005" name="EMBO J.">
        <title>Functional link between ribosome formation and biogenesis of iron-sulfur proteins.</title>
        <authorList>
            <person name="Yarunin A."/>
            <person name="Panse V.G."/>
            <person name="Petfalski E."/>
            <person name="Dez C."/>
            <person name="Tollervey D."/>
            <person name="Hurt E.C."/>
        </authorList>
    </citation>
    <scope>FUNCTION</scope>
</reference>
<reference key="8">
    <citation type="journal article" date="2005" name="Proc. Natl. Acad. Sci. U.S.A.">
        <title>The eukaryotic P loop NTPase Nbp35: an essential component of the cytosolic and nuclear iron-sulfur protein assembly machinery.</title>
        <authorList>
            <person name="Hausmann A."/>
            <person name="Aguilar Netz D.J."/>
            <person name="Balk J."/>
            <person name="Pierik A.J."/>
            <person name="Muehlenhoff U."/>
            <person name="Lill R."/>
        </authorList>
    </citation>
    <scope>FUNCTION</scope>
    <scope>SUBCELLULAR LOCATION</scope>
    <scope>IRON-SULFUR CLUSTER BINDING</scope>
</reference>
<reference key="9">
    <citation type="journal article" date="2007" name="Nat. Chem. Biol.">
        <title>The Cfd1-Nbp35 complex acts as a scaffold for iron-sulfur protein assembly in the yeast cytosol.</title>
        <authorList>
            <person name="Netz D.J.A."/>
            <person name="Pierik A.J."/>
            <person name="Stuempfig M."/>
            <person name="Muehlenhoff U."/>
            <person name="Lill R."/>
        </authorList>
    </citation>
    <scope>FUNCTION</scope>
    <scope>INTERACTION WITH CFD1</scope>
    <scope>EPR SPECTROSCOPY OF IRON-SULFUR CLUSTERS</scope>
    <scope>MUTAGENESIS OF CYS-253</scope>
</reference>
<reference key="10">
    <citation type="journal article" date="2012" name="J. Biol. Chem.">
        <title>A bridging [4Fe-4S] cluster and nucleotide binding are essential for function of the Cfd1-Nbp35 complex as a scaffold in iron-sulfur protein maturation.</title>
        <authorList>
            <person name="Netz D.J."/>
            <person name="Pierik A.J."/>
            <person name="Stumpfig M."/>
            <person name="Bill E."/>
            <person name="Sharma A.K."/>
            <person name="Pallesen L.J."/>
            <person name="Walden W.E."/>
            <person name="Lill R."/>
        </authorList>
    </citation>
    <scope>FUNCTION</scope>
    <scope>SUBUNIT</scope>
    <scope>MUTAGENESIS OF CYS-27; CYS-41; CYS-44; CYS-50; CYS-234; CYS-253; CYS-256 AND CYS-295</scope>
</reference>
<evidence type="ECO:0000255" key="1">
    <source>
        <dbReference type="HAMAP-Rule" id="MF_03038"/>
    </source>
</evidence>
<evidence type="ECO:0000269" key="2">
    <source>
    </source>
</evidence>
<evidence type="ECO:0000269" key="3">
    <source>
    </source>
</evidence>
<evidence type="ECO:0000269" key="4">
    <source>
    </source>
</evidence>
<evidence type="ECO:0000269" key="5">
    <source>
    </source>
</evidence>
<evidence type="ECO:0000269" key="6">
    <source>
    </source>
</evidence>
<evidence type="ECO:0000269" key="7">
    <source>
    </source>
</evidence>
<evidence type="ECO:0000305" key="8"/>
<proteinExistence type="evidence at protein level"/>
<organism>
    <name type="scientific">Saccharomyces cerevisiae (strain ATCC 204508 / S288c)</name>
    <name type="common">Baker's yeast</name>
    <dbReference type="NCBI Taxonomy" id="559292"/>
    <lineage>
        <taxon>Eukaryota</taxon>
        <taxon>Fungi</taxon>
        <taxon>Dikarya</taxon>
        <taxon>Ascomycota</taxon>
        <taxon>Saccharomycotina</taxon>
        <taxon>Saccharomycetes</taxon>
        <taxon>Saccharomycetales</taxon>
        <taxon>Saccharomycetaceae</taxon>
        <taxon>Saccharomyces</taxon>
    </lineage>
</organism>
<name>NBP35_YEAST</name>
<gene>
    <name evidence="1" type="primary">NBP35</name>
    <name type="ordered locus">YGL091C</name>
</gene>
<sequence>MTEILPHVNDEVLPAEYELNQPEPEHCPGPESDMAGKSDACGGCANKEICESLPKGPDPDIPLITDNLSGIEHKILVLSGKGGVGKSTFAAMLSWALSADEDLQVGAMDLDICGPSLPHMLGCIKETVHESNSGWTPVYVTDNLATMSIQYMLPEDDSAIIWRGSKKNLLIKKFLKDVDWDKLDYLVIDTPPGTSDEHISINKYMRESGIDGALVVTTPQEVALLDVRKEIDFCKKAGINILGLVENMSGFVCPNCKGESQIFKATTGGGEALCKELGIKFLGSVPLDPRIGKSCDMGESFLDNYPDSPASSAVLNVVEALRDAVGDV</sequence>
<accession>P52920</accession>
<accession>D6VU54</accession>
<comment type="function">
    <text evidence="1 2 3 4 5 6">Component of the cytosolic iron-sulfur (Fe/S) protein assembly (CIA) machinery. Required for maturation of extramitochondrial Fe-S proteins. The NBP35-CFD1 heterotetramer forms a Fe-S scaffold complex, mediating the de novo assembly of an Fe-S cluster and its transfer to target apoproteins. Required for biogenesis and export of both ribosomal subunits, which may reflect a role in assembly of the Fe/S clusters in RLI1, a protein which performs rRNA processing and ribosome export.</text>
</comment>
<comment type="cofactor">
    <cofactor>
        <name>[4Fe-4S] cluster</name>
        <dbReference type="ChEBI" id="CHEBI:49883"/>
    </cofactor>
    <text>Binds 4 [4Fe-4S] clusters per heterotetramer. Contains two stable clusters in the N-termini of NBP35 and two labile, bridging clusters between subunits of the NBP35-CFD1 heterotetramer.</text>
</comment>
<comment type="subunit">
    <text evidence="1 6">Heterotetramer of 2 NBP35 and 2 CFD1 chains.</text>
</comment>
<comment type="interaction">
    <interactant intactId="EBI-11880">
        <id>P52920</id>
    </interactant>
    <interactant intactId="EBI-24924">
        <id>P40558</id>
        <label>CFD1</label>
    </interactant>
    <organismsDiffer>false</organismsDiffer>
    <experiments>11</experiments>
</comment>
<comment type="subcellular location">
    <subcellularLocation>
        <location>Cytoplasm</location>
    </subcellularLocation>
    <subcellularLocation>
        <location>Nucleus</location>
    </subcellularLocation>
</comment>
<comment type="similarity">
    <text evidence="1">Belongs to the Mrp/NBP35 ATP-binding proteins family. NUBP1/NBP35 subfamily.</text>
</comment>
<protein>
    <recommendedName>
        <fullName evidence="1">Cytosolic Fe-S cluster assembly factor NBP35</fullName>
    </recommendedName>
    <alternativeName>
        <fullName evidence="1">Nucleotide-binding protein 35</fullName>
    </alternativeName>
</protein>
<feature type="chain" id="PRO_0000184947" description="Cytosolic Fe-S cluster assembly factor NBP35">
    <location>
        <begin position="1"/>
        <end position="328"/>
    </location>
</feature>
<feature type="binding site">
    <location>
        <position position="27"/>
    </location>
    <ligand>
        <name>[4Fe-4S] cluster</name>
        <dbReference type="ChEBI" id="CHEBI:49883"/>
        <label>1</label>
    </ligand>
</feature>
<feature type="binding site">
    <location>
        <position position="41"/>
    </location>
    <ligand>
        <name>[4Fe-4S] cluster</name>
        <dbReference type="ChEBI" id="CHEBI:49883"/>
        <label>1</label>
    </ligand>
</feature>
<feature type="binding site">
    <location>
        <position position="44"/>
    </location>
    <ligand>
        <name>[4Fe-4S] cluster</name>
        <dbReference type="ChEBI" id="CHEBI:49883"/>
        <label>1</label>
    </ligand>
</feature>
<feature type="binding site">
    <location>
        <position position="50"/>
    </location>
    <ligand>
        <name>[4Fe-4S] cluster</name>
        <dbReference type="ChEBI" id="CHEBI:49883"/>
        <label>1</label>
    </ligand>
</feature>
<feature type="binding site" evidence="1">
    <location>
        <begin position="80"/>
        <end position="87"/>
    </location>
    <ligand>
        <name>ATP</name>
        <dbReference type="ChEBI" id="CHEBI:30616"/>
    </ligand>
</feature>
<feature type="binding site">
    <location>
        <position position="253"/>
    </location>
    <ligand>
        <name>[4Fe-4S] cluster</name>
        <dbReference type="ChEBI" id="CHEBI:49883"/>
        <label>2</label>
        <note>ligand shared between dimeric partners</note>
    </ligand>
</feature>
<feature type="binding site">
    <location>
        <position position="256"/>
    </location>
    <ligand>
        <name>[4Fe-4S] cluster</name>
        <dbReference type="ChEBI" id="CHEBI:49883"/>
        <label>2</label>
        <note>ligand shared between dimeric partners</note>
    </ligand>
</feature>
<feature type="mutagenesis site" description="Supports growth, albeit at a lower rate." evidence="6">
    <original>C</original>
    <variation>A</variation>
    <location>
        <position position="27"/>
    </location>
</feature>
<feature type="mutagenesis site" description="Loss of function." evidence="6">
    <original>C</original>
    <variation>A</variation>
    <location>
        <position position="41"/>
    </location>
</feature>
<feature type="mutagenesis site" description="Loss of function." evidence="6 7">
    <original>C</original>
    <variation>A</variation>
    <variation>G</variation>
    <location>
        <position position="44"/>
    </location>
</feature>
<feature type="mutagenesis site" description="Loss of function." evidence="6">
    <original>C</original>
    <variation>A</variation>
    <location>
        <position position="50"/>
    </location>
</feature>
<feature type="mutagenesis site" description="Lethal." evidence="7">
    <original>K</original>
    <variation>Q</variation>
    <location>
        <position position="86"/>
    </location>
</feature>
<feature type="mutagenesis site" description="Does not impair function." evidence="6">
    <original>C</original>
    <variation>A</variation>
    <location>
        <position position="234"/>
    </location>
</feature>
<feature type="mutagenesis site" description="Loss fo function and disrupts heterotetramer formation." evidence="5 6">
    <original>C</original>
    <variation>A</variation>
    <location>
        <position position="253"/>
    </location>
</feature>
<feature type="mutagenesis site" description="Loss of function and disrupts heterotetramer formation." evidence="6">
    <original>C</original>
    <variation>A</variation>
    <location>
        <position position="256"/>
    </location>
</feature>
<feature type="mutagenesis site" description="Does not impair function." evidence="6">
    <original>C</original>
    <variation>A</variation>
    <location>
        <position position="295"/>
    </location>
</feature>
<feature type="sequence conflict" description="In Ref. 1; CAA64779." evidence="8" ref="1">
    <original>D</original>
    <variation>S</variation>
    <location>
        <position position="58"/>
    </location>
</feature>
<dbReference type="EMBL" id="X95533">
    <property type="protein sequence ID" value="CAA64779.1"/>
    <property type="molecule type" value="Genomic_DNA"/>
</dbReference>
<dbReference type="EMBL" id="Z72613">
    <property type="protein sequence ID" value="CAA96797.1"/>
    <property type="molecule type" value="Genomic_DNA"/>
</dbReference>
<dbReference type="EMBL" id="BK006941">
    <property type="protein sequence ID" value="DAA08015.1"/>
    <property type="molecule type" value="Genomic_DNA"/>
</dbReference>
<dbReference type="PIR" id="S64098">
    <property type="entry name" value="S64098"/>
</dbReference>
<dbReference type="RefSeq" id="NP_011424.3">
    <property type="nucleotide sequence ID" value="NM_001180956.3"/>
</dbReference>
<dbReference type="SMR" id="P52920"/>
<dbReference type="BioGRID" id="33160">
    <property type="interactions" value="220"/>
</dbReference>
<dbReference type="ComplexPortal" id="CPX-385">
    <property type="entry name" value="CFD1-NBP35 Fe-S cluster assembly complex"/>
</dbReference>
<dbReference type="DIP" id="DIP-1767N"/>
<dbReference type="FunCoup" id="P52920">
    <property type="interactions" value="661"/>
</dbReference>
<dbReference type="IntAct" id="P52920">
    <property type="interactions" value="11"/>
</dbReference>
<dbReference type="MINT" id="P52920"/>
<dbReference type="STRING" id="4932.YGL091C"/>
<dbReference type="iPTMnet" id="P52920"/>
<dbReference type="PaxDb" id="4932-YGL091C"/>
<dbReference type="PeptideAtlas" id="P52920"/>
<dbReference type="EnsemblFungi" id="YGL091C_mRNA">
    <property type="protein sequence ID" value="YGL091C"/>
    <property type="gene ID" value="YGL091C"/>
</dbReference>
<dbReference type="GeneID" id="852789"/>
<dbReference type="KEGG" id="sce:YGL091C"/>
<dbReference type="AGR" id="SGD:S000003059"/>
<dbReference type="SGD" id="S000003059">
    <property type="gene designation" value="NBP35"/>
</dbReference>
<dbReference type="VEuPathDB" id="FungiDB:YGL091C"/>
<dbReference type="eggNOG" id="KOG3022">
    <property type="taxonomic scope" value="Eukaryota"/>
</dbReference>
<dbReference type="GeneTree" id="ENSGT00950000183193"/>
<dbReference type="HOGENOM" id="CLU_024839_0_1_1"/>
<dbReference type="InParanoid" id="P52920"/>
<dbReference type="OMA" id="VSGCPMR"/>
<dbReference type="OrthoDB" id="1741334at2759"/>
<dbReference type="BioCyc" id="YEAST:G3O-30591-MONOMER"/>
<dbReference type="BioGRID-ORCS" id="852789">
    <property type="hits" value="7 hits in 10 CRISPR screens"/>
</dbReference>
<dbReference type="PRO" id="PR:P52920"/>
<dbReference type="Proteomes" id="UP000002311">
    <property type="component" value="Chromosome VII"/>
</dbReference>
<dbReference type="RNAct" id="P52920">
    <property type="molecule type" value="protein"/>
</dbReference>
<dbReference type="GO" id="GO:0005737">
    <property type="term" value="C:cytoplasm"/>
    <property type="evidence" value="ECO:0000314"/>
    <property type="project" value="SGD"/>
</dbReference>
<dbReference type="GO" id="GO:0005829">
    <property type="term" value="C:cytosol"/>
    <property type="evidence" value="ECO:0000314"/>
    <property type="project" value="ComplexPortal"/>
</dbReference>
<dbReference type="GO" id="GO:1904564">
    <property type="term" value="C:cytosolic [4Fe-4S] assembly scaffold complex"/>
    <property type="evidence" value="ECO:0000314"/>
    <property type="project" value="ComplexPortal"/>
</dbReference>
<dbReference type="GO" id="GO:1990229">
    <property type="term" value="C:iron-sulfur cluster assembly complex"/>
    <property type="evidence" value="ECO:0000314"/>
    <property type="project" value="ComplexPortal"/>
</dbReference>
<dbReference type="GO" id="GO:0005634">
    <property type="term" value="C:nucleus"/>
    <property type="evidence" value="ECO:0000314"/>
    <property type="project" value="SGD"/>
</dbReference>
<dbReference type="GO" id="GO:0051539">
    <property type="term" value="F:4 iron, 4 sulfur cluster binding"/>
    <property type="evidence" value="ECO:0000314"/>
    <property type="project" value="SGD"/>
</dbReference>
<dbReference type="GO" id="GO:0005524">
    <property type="term" value="F:ATP binding"/>
    <property type="evidence" value="ECO:0007669"/>
    <property type="project" value="UniProtKB-KW"/>
</dbReference>
<dbReference type="GO" id="GO:0016887">
    <property type="term" value="F:ATP hydrolysis activity"/>
    <property type="evidence" value="ECO:0000314"/>
    <property type="project" value="SGD"/>
</dbReference>
<dbReference type="GO" id="GO:0140663">
    <property type="term" value="F:ATP-dependent FeS chaperone activity"/>
    <property type="evidence" value="ECO:0007669"/>
    <property type="project" value="InterPro"/>
</dbReference>
<dbReference type="GO" id="GO:0005506">
    <property type="term" value="F:iron ion binding"/>
    <property type="evidence" value="ECO:0000315"/>
    <property type="project" value="SGD"/>
</dbReference>
<dbReference type="GO" id="GO:0051536">
    <property type="term" value="F:iron-sulfur cluster binding"/>
    <property type="evidence" value="ECO:0000318"/>
    <property type="project" value="GO_Central"/>
</dbReference>
<dbReference type="GO" id="GO:0016226">
    <property type="term" value="P:iron-sulfur cluster assembly"/>
    <property type="evidence" value="ECO:0000314"/>
    <property type="project" value="ComplexPortal"/>
</dbReference>
<dbReference type="GO" id="GO:0002098">
    <property type="term" value="P:tRNA wobble uridine modification"/>
    <property type="evidence" value="ECO:0000315"/>
    <property type="project" value="SGD"/>
</dbReference>
<dbReference type="CDD" id="cd02037">
    <property type="entry name" value="Mrp_NBP35"/>
    <property type="match status" value="1"/>
</dbReference>
<dbReference type="FunFam" id="3.40.50.300:FF:000427">
    <property type="entry name" value="Cytosolic Fe-S cluster assembly factor NUBP1"/>
    <property type="match status" value="1"/>
</dbReference>
<dbReference type="Gene3D" id="3.40.50.300">
    <property type="entry name" value="P-loop containing nucleotide triphosphate hydrolases"/>
    <property type="match status" value="1"/>
</dbReference>
<dbReference type="HAMAP" id="MF_02040">
    <property type="entry name" value="Mrp_NBP35"/>
    <property type="match status" value="1"/>
</dbReference>
<dbReference type="HAMAP" id="MF_03038">
    <property type="entry name" value="NUBP1"/>
    <property type="match status" value="1"/>
</dbReference>
<dbReference type="InterPro" id="IPR000808">
    <property type="entry name" value="Mrp-like_CS"/>
</dbReference>
<dbReference type="InterPro" id="IPR019591">
    <property type="entry name" value="Mrp/NBP35_ATP-bd"/>
</dbReference>
<dbReference type="InterPro" id="IPR028601">
    <property type="entry name" value="NUBP1/Nbp35"/>
</dbReference>
<dbReference type="InterPro" id="IPR027417">
    <property type="entry name" value="P-loop_NTPase"/>
</dbReference>
<dbReference type="InterPro" id="IPR033756">
    <property type="entry name" value="YlxH/NBP35"/>
</dbReference>
<dbReference type="PANTHER" id="PTHR23264:SF35">
    <property type="entry name" value="CYTOSOLIC FE-S CLUSTER ASSEMBLY FACTOR NUBP1"/>
    <property type="match status" value="1"/>
</dbReference>
<dbReference type="PANTHER" id="PTHR23264">
    <property type="entry name" value="NUCLEOTIDE-BINDING PROTEIN NBP35 YEAST -RELATED"/>
    <property type="match status" value="1"/>
</dbReference>
<dbReference type="Pfam" id="PF10609">
    <property type="entry name" value="ParA"/>
    <property type="match status" value="1"/>
</dbReference>
<dbReference type="SUPFAM" id="SSF52540">
    <property type="entry name" value="P-loop containing nucleoside triphosphate hydrolases"/>
    <property type="match status" value="1"/>
</dbReference>
<dbReference type="PROSITE" id="PS01215">
    <property type="entry name" value="MRP"/>
    <property type="match status" value="1"/>
</dbReference>